<comment type="function">
    <text evidence="1">Catalyzes the specific phosphorylation of 1,6-anhydro-N-acetylmuramic acid (anhMurNAc) with the simultaneous cleavage of the 1,6-anhydro ring, generating MurNAc-6-P. Is required for the utilization of anhMurNAc either imported from the medium or derived from its own cell wall murein, and thus plays a role in cell wall recycling.</text>
</comment>
<comment type="catalytic activity">
    <reaction evidence="1">
        <text>1,6-anhydro-N-acetyl-beta-muramate + ATP + H2O = N-acetyl-D-muramate 6-phosphate + ADP + H(+)</text>
        <dbReference type="Rhea" id="RHEA:24952"/>
        <dbReference type="ChEBI" id="CHEBI:15377"/>
        <dbReference type="ChEBI" id="CHEBI:15378"/>
        <dbReference type="ChEBI" id="CHEBI:30616"/>
        <dbReference type="ChEBI" id="CHEBI:58690"/>
        <dbReference type="ChEBI" id="CHEBI:58722"/>
        <dbReference type="ChEBI" id="CHEBI:456216"/>
        <dbReference type="EC" id="2.7.1.170"/>
    </reaction>
</comment>
<comment type="pathway">
    <text evidence="1">Amino-sugar metabolism; 1,6-anhydro-N-acetylmuramate degradation.</text>
</comment>
<comment type="pathway">
    <text evidence="1">Cell wall biogenesis; peptidoglycan recycling.</text>
</comment>
<comment type="similarity">
    <text evidence="1">Belongs to the anhydro-N-acetylmuramic acid kinase family.</text>
</comment>
<dbReference type="EC" id="2.7.1.170" evidence="1"/>
<dbReference type="EMBL" id="CP000352">
    <property type="protein sequence ID" value="ABF07301.1"/>
    <property type="molecule type" value="Genomic_DNA"/>
</dbReference>
<dbReference type="RefSeq" id="WP_011515290.1">
    <property type="nucleotide sequence ID" value="NC_007973.1"/>
</dbReference>
<dbReference type="SMR" id="Q1LRC5"/>
<dbReference type="STRING" id="266264.Rmet_0415"/>
<dbReference type="KEGG" id="rme:Rmet_0415"/>
<dbReference type="eggNOG" id="COG2377">
    <property type="taxonomic scope" value="Bacteria"/>
</dbReference>
<dbReference type="HOGENOM" id="CLU_038782_0_0_4"/>
<dbReference type="UniPathway" id="UPA00343"/>
<dbReference type="UniPathway" id="UPA00544"/>
<dbReference type="Proteomes" id="UP000002429">
    <property type="component" value="Chromosome"/>
</dbReference>
<dbReference type="GO" id="GO:0005524">
    <property type="term" value="F:ATP binding"/>
    <property type="evidence" value="ECO:0007669"/>
    <property type="project" value="UniProtKB-UniRule"/>
</dbReference>
<dbReference type="GO" id="GO:0016301">
    <property type="term" value="F:kinase activity"/>
    <property type="evidence" value="ECO:0007669"/>
    <property type="project" value="UniProtKB-KW"/>
</dbReference>
<dbReference type="GO" id="GO:0016773">
    <property type="term" value="F:phosphotransferase activity, alcohol group as acceptor"/>
    <property type="evidence" value="ECO:0007669"/>
    <property type="project" value="UniProtKB-UniRule"/>
</dbReference>
<dbReference type="GO" id="GO:0097175">
    <property type="term" value="P:1,6-anhydro-N-acetyl-beta-muramic acid catabolic process"/>
    <property type="evidence" value="ECO:0007669"/>
    <property type="project" value="UniProtKB-UniRule"/>
</dbReference>
<dbReference type="GO" id="GO:0006040">
    <property type="term" value="P:amino sugar metabolic process"/>
    <property type="evidence" value="ECO:0007669"/>
    <property type="project" value="InterPro"/>
</dbReference>
<dbReference type="GO" id="GO:0009254">
    <property type="term" value="P:peptidoglycan turnover"/>
    <property type="evidence" value="ECO:0007669"/>
    <property type="project" value="UniProtKB-UniRule"/>
</dbReference>
<dbReference type="CDD" id="cd24050">
    <property type="entry name" value="ASKHA_NBD_ANMK"/>
    <property type="match status" value="1"/>
</dbReference>
<dbReference type="Gene3D" id="3.30.420.40">
    <property type="match status" value="2"/>
</dbReference>
<dbReference type="HAMAP" id="MF_01270">
    <property type="entry name" value="AnhMurNAc_kinase"/>
    <property type="match status" value="1"/>
</dbReference>
<dbReference type="InterPro" id="IPR005338">
    <property type="entry name" value="Anhydro_N_Ac-Mur_kinase"/>
</dbReference>
<dbReference type="InterPro" id="IPR043129">
    <property type="entry name" value="ATPase_NBD"/>
</dbReference>
<dbReference type="NCBIfam" id="NF007139">
    <property type="entry name" value="PRK09585.1-3"/>
    <property type="match status" value="1"/>
</dbReference>
<dbReference type="PANTHER" id="PTHR30605">
    <property type="entry name" value="ANHYDRO-N-ACETYLMURAMIC ACID KINASE"/>
    <property type="match status" value="1"/>
</dbReference>
<dbReference type="PANTHER" id="PTHR30605:SF0">
    <property type="entry name" value="ANHYDRO-N-ACETYLMURAMIC ACID KINASE"/>
    <property type="match status" value="1"/>
</dbReference>
<dbReference type="Pfam" id="PF03702">
    <property type="entry name" value="AnmK"/>
    <property type="match status" value="1"/>
</dbReference>
<dbReference type="SUPFAM" id="SSF53067">
    <property type="entry name" value="Actin-like ATPase domain"/>
    <property type="match status" value="1"/>
</dbReference>
<reference key="1">
    <citation type="journal article" date="2010" name="PLoS ONE">
        <title>The complete genome sequence of Cupriavidus metallidurans strain CH34, a master survivalist in harsh and anthropogenic environments.</title>
        <authorList>
            <person name="Janssen P.J."/>
            <person name="Van Houdt R."/>
            <person name="Moors H."/>
            <person name="Monsieurs P."/>
            <person name="Morin N."/>
            <person name="Michaux A."/>
            <person name="Benotmane M.A."/>
            <person name="Leys N."/>
            <person name="Vallaeys T."/>
            <person name="Lapidus A."/>
            <person name="Monchy S."/>
            <person name="Medigue C."/>
            <person name="Taghavi S."/>
            <person name="McCorkle S."/>
            <person name="Dunn J."/>
            <person name="van der Lelie D."/>
            <person name="Mergeay M."/>
        </authorList>
    </citation>
    <scope>NUCLEOTIDE SEQUENCE [LARGE SCALE GENOMIC DNA]</scope>
    <source>
        <strain>ATCC 43123 / DSM 2839 / NBRC 102507 / CH34</strain>
    </source>
</reference>
<sequence length="380" mass="39633">MPASPQSSEMFIGLMSGTSMDGADGVLVDFSGAQPAVLAAAHTPFPAPLREAFGALQQPGDDEIHREALASNGLARVYADCVATLLRTASVTADRVAAIGAHGQTIRHRPGQYDGTGYTRQSQHPALLAELTGIDVVADFRSRDVAAGGQGAPLVPAVHAALFGAADETRVVCNIGGISNISILPAAGTGRPVTGFDCGPGNALLDDWIHRHRGTPYDDGGAWAASGKVDESLLDQMLAEPYFRALPPKSTGRDLFHPGWLQSLLDTYGNAQPQPVDIQATLATLTATAIAQDVQRYAPEARRLIVCGGGAHNDFVMTTMANQLPGVLVQTTGDFGVPVSQVEAIAFAWLARQCTRRAPGNVATVTGAAGPRVLGAIYPR</sequence>
<gene>
    <name evidence="1" type="primary">anmK</name>
    <name type="ordered locus">Rmet_0415</name>
</gene>
<name>ANMK_CUPMC</name>
<evidence type="ECO:0000255" key="1">
    <source>
        <dbReference type="HAMAP-Rule" id="MF_01270"/>
    </source>
</evidence>
<accession>Q1LRC5</accession>
<organism>
    <name type="scientific">Cupriavidus metallidurans (strain ATCC 43123 / DSM 2839 / NBRC 102507 / CH34)</name>
    <name type="common">Ralstonia metallidurans</name>
    <dbReference type="NCBI Taxonomy" id="266264"/>
    <lineage>
        <taxon>Bacteria</taxon>
        <taxon>Pseudomonadati</taxon>
        <taxon>Pseudomonadota</taxon>
        <taxon>Betaproteobacteria</taxon>
        <taxon>Burkholderiales</taxon>
        <taxon>Burkholderiaceae</taxon>
        <taxon>Cupriavidus</taxon>
    </lineage>
</organism>
<proteinExistence type="inferred from homology"/>
<keyword id="KW-0067">ATP-binding</keyword>
<keyword id="KW-0119">Carbohydrate metabolism</keyword>
<keyword id="KW-0418">Kinase</keyword>
<keyword id="KW-0547">Nucleotide-binding</keyword>
<keyword id="KW-1185">Reference proteome</keyword>
<keyword id="KW-0808">Transferase</keyword>
<feature type="chain" id="PRO_0000250038" description="Anhydro-N-acetylmuramic acid kinase">
    <location>
        <begin position="1"/>
        <end position="380"/>
    </location>
</feature>
<feature type="binding site" evidence="1">
    <location>
        <begin position="17"/>
        <end position="24"/>
    </location>
    <ligand>
        <name>ATP</name>
        <dbReference type="ChEBI" id="CHEBI:30616"/>
    </ligand>
</feature>
<protein>
    <recommendedName>
        <fullName evidence="1">Anhydro-N-acetylmuramic acid kinase</fullName>
        <ecNumber evidence="1">2.7.1.170</ecNumber>
    </recommendedName>
    <alternativeName>
        <fullName evidence="1">AnhMurNAc kinase</fullName>
    </alternativeName>
</protein>